<comment type="function">
    <text evidence="1">Catalyzes the phosphorylation of the 3'-hydroxyl group of dephosphocoenzyme A to form coenzyme A.</text>
</comment>
<comment type="catalytic activity">
    <reaction evidence="1">
        <text>3'-dephospho-CoA + ATP = ADP + CoA + H(+)</text>
        <dbReference type="Rhea" id="RHEA:18245"/>
        <dbReference type="ChEBI" id="CHEBI:15378"/>
        <dbReference type="ChEBI" id="CHEBI:30616"/>
        <dbReference type="ChEBI" id="CHEBI:57287"/>
        <dbReference type="ChEBI" id="CHEBI:57328"/>
        <dbReference type="ChEBI" id="CHEBI:456216"/>
        <dbReference type="EC" id="2.7.1.24"/>
    </reaction>
</comment>
<comment type="pathway">
    <text evidence="1">Cofactor biosynthesis; coenzyme A biosynthesis; CoA from (R)-pantothenate: step 5/5.</text>
</comment>
<comment type="subcellular location">
    <subcellularLocation>
        <location evidence="1">Cytoplasm</location>
    </subcellularLocation>
</comment>
<comment type="similarity">
    <text evidence="1 2">Belongs to the CoaE family.</text>
</comment>
<accession>O25502</accession>
<proteinExistence type="inferred from homology"/>
<reference key="1">
    <citation type="journal article" date="1997" name="Nature">
        <title>The complete genome sequence of the gastric pathogen Helicobacter pylori.</title>
        <authorList>
            <person name="Tomb J.-F."/>
            <person name="White O."/>
            <person name="Kerlavage A.R."/>
            <person name="Clayton R.A."/>
            <person name="Sutton G.G."/>
            <person name="Fleischmann R.D."/>
            <person name="Ketchum K.A."/>
            <person name="Klenk H.-P."/>
            <person name="Gill S.R."/>
            <person name="Dougherty B.A."/>
            <person name="Nelson K.E."/>
            <person name="Quackenbush J."/>
            <person name="Zhou L."/>
            <person name="Kirkness E.F."/>
            <person name="Peterson S.N."/>
            <person name="Loftus B.J."/>
            <person name="Richardson D.L."/>
            <person name="Dodson R.J."/>
            <person name="Khalak H.G."/>
            <person name="Glodek A."/>
            <person name="McKenney K."/>
            <person name="FitzGerald L.M."/>
            <person name="Lee N."/>
            <person name="Adams M.D."/>
            <person name="Hickey E.K."/>
            <person name="Berg D.E."/>
            <person name="Gocayne J.D."/>
            <person name="Utterback T.R."/>
            <person name="Peterson J.D."/>
            <person name="Kelley J.M."/>
            <person name="Cotton M.D."/>
            <person name="Weidman J.F."/>
            <person name="Fujii C."/>
            <person name="Bowman C."/>
            <person name="Watthey L."/>
            <person name="Wallin E."/>
            <person name="Hayes W.S."/>
            <person name="Borodovsky M."/>
            <person name="Karp P.D."/>
            <person name="Smith H.O."/>
            <person name="Fraser C.M."/>
            <person name="Venter J.C."/>
        </authorList>
    </citation>
    <scope>NUCLEOTIDE SEQUENCE [LARGE SCALE GENOMIC DNA]</scope>
    <source>
        <strain>ATCC 700392 / 26695</strain>
    </source>
</reference>
<sequence length="196" mass="22663">MVLKNAIALTGGIGTGKSTTIKILESQGYKILDADKIAHQLLQEHRFKIAQHFGSDILEKDILNRKKLGAIVFQDAHELKWLEDFLHPLIREHMLKKAYELEKNHQAYFLDIPLFFEVGGKKCYPVSKVVLVYASRALQIERLLERDKLKEAEILQRLACQMDIEQKRAMSDYIIDNSSSLKDLNKQVERFLKTLL</sequence>
<protein>
    <recommendedName>
        <fullName evidence="1">Dephospho-CoA kinase</fullName>
        <ecNumber evidence="1">2.7.1.24</ecNumber>
    </recommendedName>
    <alternativeName>
        <fullName evidence="1">Dephosphocoenzyme A kinase</fullName>
    </alternativeName>
</protein>
<gene>
    <name evidence="1" type="primary">coaE</name>
    <name type="ordered locus">HP_0831</name>
</gene>
<dbReference type="EC" id="2.7.1.24" evidence="1"/>
<dbReference type="EMBL" id="AE000511">
    <property type="protein sequence ID" value="AAD07881.1"/>
    <property type="molecule type" value="Genomic_DNA"/>
</dbReference>
<dbReference type="PIR" id="G64623">
    <property type="entry name" value="G64623"/>
</dbReference>
<dbReference type="RefSeq" id="NP_207624.1">
    <property type="nucleotide sequence ID" value="NC_000915.1"/>
</dbReference>
<dbReference type="RefSeq" id="WP_000243282.1">
    <property type="nucleotide sequence ID" value="NC_018939.1"/>
</dbReference>
<dbReference type="SMR" id="O25502"/>
<dbReference type="FunCoup" id="O25502">
    <property type="interactions" value="276"/>
</dbReference>
<dbReference type="IntAct" id="O25502">
    <property type="interactions" value="1"/>
</dbReference>
<dbReference type="STRING" id="85962.HP_0831"/>
<dbReference type="PaxDb" id="85962-C694_04260"/>
<dbReference type="EnsemblBacteria" id="AAD07881">
    <property type="protein sequence ID" value="AAD07881"/>
    <property type="gene ID" value="HP_0831"/>
</dbReference>
<dbReference type="KEGG" id="heo:C694_04260"/>
<dbReference type="KEGG" id="hpy:HP_0831"/>
<dbReference type="PATRIC" id="fig|85962.47.peg.886"/>
<dbReference type="eggNOG" id="COG0237">
    <property type="taxonomic scope" value="Bacteria"/>
</dbReference>
<dbReference type="InParanoid" id="O25502"/>
<dbReference type="OrthoDB" id="9812943at2"/>
<dbReference type="PhylomeDB" id="O25502"/>
<dbReference type="UniPathway" id="UPA00241">
    <property type="reaction ID" value="UER00356"/>
</dbReference>
<dbReference type="Proteomes" id="UP000000429">
    <property type="component" value="Chromosome"/>
</dbReference>
<dbReference type="GO" id="GO:0005737">
    <property type="term" value="C:cytoplasm"/>
    <property type="evidence" value="ECO:0007669"/>
    <property type="project" value="UniProtKB-SubCell"/>
</dbReference>
<dbReference type="GO" id="GO:0005524">
    <property type="term" value="F:ATP binding"/>
    <property type="evidence" value="ECO:0007669"/>
    <property type="project" value="UniProtKB-UniRule"/>
</dbReference>
<dbReference type="GO" id="GO:0004140">
    <property type="term" value="F:dephospho-CoA kinase activity"/>
    <property type="evidence" value="ECO:0000318"/>
    <property type="project" value="GO_Central"/>
</dbReference>
<dbReference type="GO" id="GO:0015937">
    <property type="term" value="P:coenzyme A biosynthetic process"/>
    <property type="evidence" value="ECO:0000318"/>
    <property type="project" value="GO_Central"/>
</dbReference>
<dbReference type="CDD" id="cd02022">
    <property type="entry name" value="DPCK"/>
    <property type="match status" value="1"/>
</dbReference>
<dbReference type="FunFam" id="3.40.50.300:FF:003590">
    <property type="entry name" value="Dephospho-CoA kinase"/>
    <property type="match status" value="1"/>
</dbReference>
<dbReference type="Gene3D" id="3.40.50.300">
    <property type="entry name" value="P-loop containing nucleotide triphosphate hydrolases"/>
    <property type="match status" value="1"/>
</dbReference>
<dbReference type="HAMAP" id="MF_00376">
    <property type="entry name" value="Dephospho_CoA_kinase"/>
    <property type="match status" value="1"/>
</dbReference>
<dbReference type="InterPro" id="IPR001977">
    <property type="entry name" value="Depp_CoAkinase"/>
</dbReference>
<dbReference type="InterPro" id="IPR027417">
    <property type="entry name" value="P-loop_NTPase"/>
</dbReference>
<dbReference type="NCBIfam" id="TIGR00152">
    <property type="entry name" value="dephospho-CoA kinase"/>
    <property type="match status" value="1"/>
</dbReference>
<dbReference type="PANTHER" id="PTHR10695:SF46">
    <property type="entry name" value="BIFUNCTIONAL COENZYME A SYNTHASE-RELATED"/>
    <property type="match status" value="1"/>
</dbReference>
<dbReference type="PANTHER" id="PTHR10695">
    <property type="entry name" value="DEPHOSPHO-COA KINASE-RELATED"/>
    <property type="match status" value="1"/>
</dbReference>
<dbReference type="Pfam" id="PF01121">
    <property type="entry name" value="CoaE"/>
    <property type="match status" value="1"/>
</dbReference>
<dbReference type="SUPFAM" id="SSF52540">
    <property type="entry name" value="P-loop containing nucleoside triphosphate hydrolases"/>
    <property type="match status" value="1"/>
</dbReference>
<dbReference type="PROSITE" id="PS51219">
    <property type="entry name" value="DPCK"/>
    <property type="match status" value="1"/>
</dbReference>
<name>COAE_HELPY</name>
<evidence type="ECO:0000255" key="1">
    <source>
        <dbReference type="HAMAP-Rule" id="MF_00376"/>
    </source>
</evidence>
<evidence type="ECO:0000305" key="2"/>
<keyword id="KW-0067">ATP-binding</keyword>
<keyword id="KW-0173">Coenzyme A biosynthesis</keyword>
<keyword id="KW-0963">Cytoplasm</keyword>
<keyword id="KW-0418">Kinase</keyword>
<keyword id="KW-0547">Nucleotide-binding</keyword>
<keyword id="KW-1185">Reference proteome</keyword>
<keyword id="KW-0808">Transferase</keyword>
<feature type="chain" id="PRO_0000172949" description="Dephospho-CoA kinase">
    <location>
        <begin position="1"/>
        <end position="196"/>
    </location>
</feature>
<feature type="domain" description="DPCK" evidence="1">
    <location>
        <begin position="6"/>
        <end position="196"/>
    </location>
</feature>
<feature type="binding site" evidence="1">
    <location>
        <begin position="14"/>
        <end position="19"/>
    </location>
    <ligand>
        <name>ATP</name>
        <dbReference type="ChEBI" id="CHEBI:30616"/>
    </ligand>
</feature>
<organism>
    <name type="scientific">Helicobacter pylori (strain ATCC 700392 / 26695)</name>
    <name type="common">Campylobacter pylori</name>
    <dbReference type="NCBI Taxonomy" id="85962"/>
    <lineage>
        <taxon>Bacteria</taxon>
        <taxon>Pseudomonadati</taxon>
        <taxon>Campylobacterota</taxon>
        <taxon>Epsilonproteobacteria</taxon>
        <taxon>Campylobacterales</taxon>
        <taxon>Helicobacteraceae</taxon>
        <taxon>Helicobacter</taxon>
    </lineage>
</organism>